<protein>
    <recommendedName>
        <fullName>mRNA transport homolog 4</fullName>
    </recommendedName>
    <alternativeName>
        <fullName>Uncharacterized helicase W08D2.7</fullName>
        <ecNumber>3.6.4.-</ecNumber>
    </alternativeName>
</protein>
<feature type="chain" id="PRO_0000102097" description="mRNA transport homolog 4">
    <location>
        <begin position="1"/>
        <end position="1026"/>
    </location>
</feature>
<feature type="domain" description="Helicase ATP-binding" evidence="1">
    <location>
        <begin position="134"/>
        <end position="290"/>
    </location>
</feature>
<feature type="domain" description="Helicase C-terminal" evidence="2">
    <location>
        <begin position="360"/>
        <end position="564"/>
    </location>
</feature>
<feature type="short sequence motif" description="DEIH box">
    <location>
        <begin position="238"/>
        <end position="241"/>
    </location>
</feature>
<feature type="binding site" evidence="1">
    <location>
        <begin position="147"/>
        <end position="154"/>
    </location>
    <ligand>
        <name>ATP</name>
        <dbReference type="ChEBI" id="CHEBI:30616"/>
    </ligand>
</feature>
<name>MTR4_CAEEL</name>
<keyword id="KW-0067">ATP-binding</keyword>
<keyword id="KW-0347">Helicase</keyword>
<keyword id="KW-0378">Hydrolase</keyword>
<keyword id="KW-0547">Nucleotide-binding</keyword>
<keyword id="KW-0539">Nucleus</keyword>
<keyword id="KW-1185">Reference proteome</keyword>
<dbReference type="EC" id="3.6.4.-"/>
<dbReference type="EMBL" id="Z70271">
    <property type="protein sequence ID" value="CAA94235.1"/>
    <property type="molecule type" value="Genomic_DNA"/>
</dbReference>
<dbReference type="PIR" id="T26282">
    <property type="entry name" value="T26282"/>
</dbReference>
<dbReference type="RefSeq" id="NP_501757.1">
    <property type="nucleotide sequence ID" value="NM_069356.6"/>
</dbReference>
<dbReference type="SMR" id="Q23223"/>
<dbReference type="BioGRID" id="42928">
    <property type="interactions" value="12"/>
</dbReference>
<dbReference type="FunCoup" id="Q23223">
    <property type="interactions" value="3711"/>
</dbReference>
<dbReference type="STRING" id="6239.W08D2.7.1"/>
<dbReference type="PaxDb" id="6239-W08D2.7"/>
<dbReference type="PeptideAtlas" id="Q23223"/>
<dbReference type="EnsemblMetazoa" id="W08D2.7.1">
    <property type="protein sequence ID" value="W08D2.7.1"/>
    <property type="gene ID" value="WBGene00012342"/>
</dbReference>
<dbReference type="GeneID" id="177824"/>
<dbReference type="KEGG" id="cel:CELE_W08D2.7"/>
<dbReference type="AGR" id="WB:WBGene00012342"/>
<dbReference type="CTD" id="177824"/>
<dbReference type="WormBase" id="W08D2.7">
    <property type="protein sequence ID" value="CE06562"/>
    <property type="gene ID" value="WBGene00012342"/>
    <property type="gene designation" value="mtr-4"/>
</dbReference>
<dbReference type="eggNOG" id="KOG0948">
    <property type="taxonomic scope" value="Eukaryota"/>
</dbReference>
<dbReference type="GeneTree" id="ENSGT00940000156183"/>
<dbReference type="HOGENOM" id="CLU_002902_0_1_1"/>
<dbReference type="InParanoid" id="Q23223"/>
<dbReference type="OMA" id="IMLKNYN"/>
<dbReference type="OrthoDB" id="64767at2759"/>
<dbReference type="PhylomeDB" id="Q23223"/>
<dbReference type="Reactome" id="R-CEL-6791226">
    <property type="pathway name" value="Major pathway of rRNA processing in the nucleolus and cytosol"/>
</dbReference>
<dbReference type="Reactome" id="R-CEL-72163">
    <property type="pathway name" value="mRNA Splicing - Major Pathway"/>
</dbReference>
<dbReference type="PRO" id="PR:Q23223"/>
<dbReference type="Proteomes" id="UP000001940">
    <property type="component" value="Chromosome IV"/>
</dbReference>
<dbReference type="Bgee" id="WBGene00012342">
    <property type="expression patterns" value="Expressed in embryo and 4 other cell types or tissues"/>
</dbReference>
<dbReference type="GO" id="GO:0031499">
    <property type="term" value="C:TRAMP complex"/>
    <property type="evidence" value="ECO:0000318"/>
    <property type="project" value="GO_Central"/>
</dbReference>
<dbReference type="GO" id="GO:0005524">
    <property type="term" value="F:ATP binding"/>
    <property type="evidence" value="ECO:0007669"/>
    <property type="project" value="UniProtKB-KW"/>
</dbReference>
<dbReference type="GO" id="GO:0016787">
    <property type="term" value="F:hydrolase activity"/>
    <property type="evidence" value="ECO:0007669"/>
    <property type="project" value="UniProtKB-KW"/>
</dbReference>
<dbReference type="GO" id="GO:0003723">
    <property type="term" value="F:RNA binding"/>
    <property type="evidence" value="ECO:0007669"/>
    <property type="project" value="InterPro"/>
</dbReference>
<dbReference type="GO" id="GO:0003724">
    <property type="term" value="F:RNA helicase activity"/>
    <property type="evidence" value="ECO:0000318"/>
    <property type="project" value="GO_Central"/>
</dbReference>
<dbReference type="GO" id="GO:0000460">
    <property type="term" value="P:maturation of 5.8S rRNA"/>
    <property type="evidence" value="ECO:0000318"/>
    <property type="project" value="GO_Central"/>
</dbReference>
<dbReference type="GO" id="GO:0006401">
    <property type="term" value="P:RNA catabolic process"/>
    <property type="evidence" value="ECO:0000318"/>
    <property type="project" value="GO_Central"/>
</dbReference>
<dbReference type="CDD" id="cd18024">
    <property type="entry name" value="DEXHc_Mtr4-like"/>
    <property type="match status" value="1"/>
</dbReference>
<dbReference type="CDD" id="cd18795">
    <property type="entry name" value="SF2_C_Ski2"/>
    <property type="match status" value="1"/>
</dbReference>
<dbReference type="FunFam" id="3.40.50.300:FF:000083">
    <property type="entry name" value="ATP-dependent RNA helicase DOB1"/>
    <property type="match status" value="1"/>
</dbReference>
<dbReference type="FunFam" id="3.40.50.300:FF:000141">
    <property type="entry name" value="ATP-dependent RNA helicase DOB1"/>
    <property type="match status" value="1"/>
</dbReference>
<dbReference type="FunFam" id="1.10.3380.30:FF:000009">
    <property type="entry name" value="DExH-box ATP-dependent RNA helicase DExH9"/>
    <property type="match status" value="1"/>
</dbReference>
<dbReference type="Gene3D" id="1.10.3380.30">
    <property type="match status" value="1"/>
</dbReference>
<dbReference type="Gene3D" id="2.40.30.300">
    <property type="match status" value="1"/>
</dbReference>
<dbReference type="Gene3D" id="3.40.50.300">
    <property type="entry name" value="P-loop containing nucleotide triphosphate hydrolases"/>
    <property type="match status" value="2"/>
</dbReference>
<dbReference type="InterPro" id="IPR011545">
    <property type="entry name" value="DEAD/DEAH_box_helicase_dom"/>
</dbReference>
<dbReference type="InterPro" id="IPR018247">
    <property type="entry name" value="EF_Hand_1_Ca_BS"/>
</dbReference>
<dbReference type="InterPro" id="IPR014001">
    <property type="entry name" value="Helicase_ATP-bd"/>
</dbReference>
<dbReference type="InterPro" id="IPR001650">
    <property type="entry name" value="Helicase_C-like"/>
</dbReference>
<dbReference type="InterPro" id="IPR048392">
    <property type="entry name" value="MTR4-like_stalk"/>
</dbReference>
<dbReference type="InterPro" id="IPR025696">
    <property type="entry name" value="MTR4_beta-barrel"/>
</dbReference>
<dbReference type="InterPro" id="IPR027417">
    <property type="entry name" value="P-loop_NTPase"/>
</dbReference>
<dbReference type="InterPro" id="IPR050699">
    <property type="entry name" value="RNA-DNA_Helicase"/>
</dbReference>
<dbReference type="InterPro" id="IPR016438">
    <property type="entry name" value="SKI2-like"/>
</dbReference>
<dbReference type="InterPro" id="IPR012961">
    <property type="entry name" value="Ski2/MTR4_C"/>
</dbReference>
<dbReference type="PANTHER" id="PTHR12131">
    <property type="entry name" value="ATP-DEPENDENT RNA AND DNA HELICASE"/>
    <property type="match status" value="1"/>
</dbReference>
<dbReference type="PANTHER" id="PTHR12131:SF7">
    <property type="entry name" value="EXOSOME RNA HELICASE MTR4"/>
    <property type="match status" value="1"/>
</dbReference>
<dbReference type="Pfam" id="PF00270">
    <property type="entry name" value="DEAD"/>
    <property type="match status" value="1"/>
</dbReference>
<dbReference type="Pfam" id="PF08148">
    <property type="entry name" value="DSHCT"/>
    <property type="match status" value="1"/>
</dbReference>
<dbReference type="Pfam" id="PF00271">
    <property type="entry name" value="Helicase_C"/>
    <property type="match status" value="1"/>
</dbReference>
<dbReference type="Pfam" id="PF21408">
    <property type="entry name" value="MTR4-like_stalk"/>
    <property type="match status" value="1"/>
</dbReference>
<dbReference type="Pfam" id="PF13234">
    <property type="entry name" value="MTR4_beta-barrel"/>
    <property type="match status" value="1"/>
</dbReference>
<dbReference type="PIRSF" id="PIRSF005198">
    <property type="entry name" value="Antiviral_helicase_SKI2"/>
    <property type="match status" value="1"/>
</dbReference>
<dbReference type="SMART" id="SM00487">
    <property type="entry name" value="DEXDc"/>
    <property type="match status" value="1"/>
</dbReference>
<dbReference type="SMART" id="SM01142">
    <property type="entry name" value="DSHCT"/>
    <property type="match status" value="1"/>
</dbReference>
<dbReference type="SMART" id="SM00490">
    <property type="entry name" value="HELICc"/>
    <property type="match status" value="1"/>
</dbReference>
<dbReference type="SUPFAM" id="SSF52540">
    <property type="entry name" value="P-loop containing nucleoside triphosphate hydrolases"/>
    <property type="match status" value="1"/>
</dbReference>
<dbReference type="PROSITE" id="PS51192">
    <property type="entry name" value="HELICASE_ATP_BIND_1"/>
    <property type="match status" value="1"/>
</dbReference>
<dbReference type="PROSITE" id="PS51194">
    <property type="entry name" value="HELICASE_CTER"/>
    <property type="match status" value="1"/>
</dbReference>
<organism>
    <name type="scientific">Caenorhabditis elegans</name>
    <dbReference type="NCBI Taxonomy" id="6239"/>
    <lineage>
        <taxon>Eukaryota</taxon>
        <taxon>Metazoa</taxon>
        <taxon>Ecdysozoa</taxon>
        <taxon>Nematoda</taxon>
        <taxon>Chromadorea</taxon>
        <taxon>Rhabditida</taxon>
        <taxon>Rhabditina</taxon>
        <taxon>Rhabditomorpha</taxon>
        <taxon>Rhabditoidea</taxon>
        <taxon>Rhabditidae</taxon>
        <taxon>Peloderinae</taxon>
        <taxon>Caenorhabditis</taxon>
    </lineage>
</organism>
<proteinExistence type="inferred from homology"/>
<accession>Q23223</accession>
<comment type="subcellular location">
    <subcellularLocation>
        <location evidence="3">Nucleus</location>
    </subcellularLocation>
</comment>
<comment type="similarity">
    <text evidence="3">Belongs to the helicase family. SKI2 subfamily.</text>
</comment>
<sequence length="1026" mass="116370">MADLFDEFIEPGVKNEIMDVEEAPENPMEKLDSAKKRQAREDMTNLLANMHNDVGVGNFDEATSKRARVEEEEEVEEARMENIIVHTIRTDNENCTHEVAIPPNAEFAELRENSGTEPAKYYPFQLDAFQKQAILCIDNNQSVLVSAHTSAGKTVVATYAIAKCLREKQRVIYTSPIKALSNQKYRELEEEFKDVGLMTGDVTLNPDASCLVMTTEILRSMLYRGSEIMKEVGWVVYDEIHYMRDKERGVVWEETIILMSKNIKQAFLSATIPNARQFAQWVASIKQQPVNVVYTDYRPTPLQHWIYPVGGEGMYEVVNVKGEFREDKFRDAMSGLATAGDSAGSFNKRRTGGGTQGDSNVLKIIRSVASNDGLNCIVFSFSRKECESYAISLKDMDFNKDHEKGMVKSVYESAIAQLSPEDQKLPQILNILPLLRRGIGVHHSGLMPILKETIEILFGEGLVKVLFATETFSMGLNMPARTVVFTSARKFDGSDNRYITSGEYIQMAGRAGRRGKDDRGTVILMVDSAMSADDAKQIIKGATDPLNSQFRLTYNMVLNLMRVEGMAVSWIINNSFHQFQSYAKIPEIDKKCVQVERKIASFNFPWENEMRTLVDLQDQLEATRQRIIQIQREPKYIVGFLHAGRLFKVKSGDRDFKWGILNQFKKEQNPDDRNDQIYLCDMMIAINTEGRFDPTNPATLVPGFDLPKRRWIRVPMTIDRITAISAVRLKVPADIDKPDGQMRLDGMMAAATKRFGNQIPLLDPIQDMEIKTVEMKELIAREKSLEGRLETHSMTKRDNMKDLKKQFEQKQDAVKELNALKAERKSVQSTLHLEELNNRKRVLRRLGYLGNDDALVLKGSVACELSASDELILTEMLLKGIFNTLDVAQTAALLSCFVFQDKCAAPKLATELQTCLSELHEQARNVAKVSNECKMEVMEDKYVSSFNPGLMDVVYQWVNGATFSEIVKTTDVFEGSIIRTLRRLEEVLREMINAAKALANKELEQKFEDARKNLKRDIVFAASLYL</sequence>
<gene>
    <name type="primary">mtr-4</name>
    <name type="ORF">W08D2.7</name>
</gene>
<evidence type="ECO:0000255" key="1">
    <source>
        <dbReference type="PROSITE-ProRule" id="PRU00541"/>
    </source>
</evidence>
<evidence type="ECO:0000255" key="2">
    <source>
        <dbReference type="PROSITE-ProRule" id="PRU00542"/>
    </source>
</evidence>
<evidence type="ECO:0000305" key="3"/>
<reference key="1">
    <citation type="journal article" date="1998" name="Science">
        <title>Genome sequence of the nematode C. elegans: a platform for investigating biology.</title>
        <authorList>
            <consortium name="The C. elegans sequencing consortium"/>
        </authorList>
    </citation>
    <scope>NUCLEOTIDE SEQUENCE [LARGE SCALE GENOMIC DNA]</scope>
    <source>
        <strain>Bristol N2</strain>
    </source>
</reference>